<name>KRI1_HUMAN</name>
<proteinExistence type="evidence at protein level"/>
<protein>
    <recommendedName>
        <fullName>Protein KRI1 homolog</fullName>
    </recommendedName>
</protein>
<keyword id="KW-0597">Phosphoprotein</keyword>
<keyword id="KW-1267">Proteomics identification</keyword>
<keyword id="KW-1185">Reference proteome</keyword>
<gene>
    <name type="primary">KRI1</name>
</gene>
<sequence>MPEPRGSSQLRVNAAFAARYNRYREREELQRLKDRYGDRDSSSDSSSESDSSDERVEFDPQQERDFYKTLSLLKKKDPRIYQKDATFYNRTASSSDSEEDPEALEKQKKVRPMYLKDYERKVILEKAGKYVDEENSDGETSNHRLQETSSQSYVEEQKQLKESFRAFVEDSEDEDGAGEGGSSLLQKRAKTRQEKAQEEADYIEWLKGQKEIRNPDSLKELTHLKEYWNDPELDEGERFLRDYILNKRYEEEEEEEEDEEEMEEEEGVHGPPVQLAVDDSSDEGELFLKKQEDFEQKYNFRFEEPDSASVKTYPRSIASSVRRKDERRKEKREETRERKKREKAKKQEELKQLKNLKRKEILAKLEKLRKVTGNEMLGLEEGDLEDDFDPAQHDQLMQKCFGDEYYGAVEEEKPQFEEEEGLEDDWNWDTWDGPEQEGDWSQQELHCEDPNFNMDADYDPSQPRKKKREAPLTGKKKRKSPFAAAVGQEKPVFEPGDKTFEEYLDEYYRLDYEDIIDDLPCRFKYRTVVPCDFGLSTEEILAADDKELNRWCSLKKTCMYRSEQEELRDKRAYSQKAQNSWKKRQVFKSLCREEAETPAEATGKPQRDEAGPQRQLPALDGSLMGPESPPAQEEEAPVSPHKKPAPQKRRRAKKARLLGPTVMLGGCEFSRQRLQAFGLNPKRLHFRQLGRQRRKQQGPKNSS</sequence>
<evidence type="ECO:0000256" key="1">
    <source>
        <dbReference type="SAM" id="MobiDB-lite"/>
    </source>
</evidence>
<evidence type="ECO:0000269" key="2">
    <source>
    </source>
</evidence>
<evidence type="ECO:0000269" key="3">
    <source>
    </source>
</evidence>
<evidence type="ECO:0000305" key="4"/>
<evidence type="ECO:0007744" key="5">
    <source>
    </source>
</evidence>
<evidence type="ECO:0007744" key="6">
    <source>
    </source>
</evidence>
<evidence type="ECO:0007744" key="7">
    <source>
    </source>
</evidence>
<evidence type="ECO:0007744" key="8">
    <source>
    </source>
</evidence>
<evidence type="ECO:0007744" key="9">
    <source>
    </source>
</evidence>
<evidence type="ECO:0007744" key="10">
    <source>
    </source>
</evidence>
<evidence type="ECO:0007744" key="11">
    <source>
    </source>
</evidence>
<evidence type="ECO:0007744" key="12">
    <source>
    </source>
</evidence>
<reference key="1">
    <citation type="journal article" date="2004" name="Nat. Genet.">
        <title>Complete sequencing and characterization of 21,243 full-length human cDNAs.</title>
        <authorList>
            <person name="Ota T."/>
            <person name="Suzuki Y."/>
            <person name="Nishikawa T."/>
            <person name="Otsuki T."/>
            <person name="Sugiyama T."/>
            <person name="Irie R."/>
            <person name="Wakamatsu A."/>
            <person name="Hayashi K."/>
            <person name="Sato H."/>
            <person name="Nagai K."/>
            <person name="Kimura K."/>
            <person name="Makita H."/>
            <person name="Sekine M."/>
            <person name="Obayashi M."/>
            <person name="Nishi T."/>
            <person name="Shibahara T."/>
            <person name="Tanaka T."/>
            <person name="Ishii S."/>
            <person name="Yamamoto J."/>
            <person name="Saito K."/>
            <person name="Kawai Y."/>
            <person name="Isono Y."/>
            <person name="Nakamura Y."/>
            <person name="Nagahari K."/>
            <person name="Murakami K."/>
            <person name="Yasuda T."/>
            <person name="Iwayanagi T."/>
            <person name="Wagatsuma M."/>
            <person name="Shiratori A."/>
            <person name="Sudo H."/>
            <person name="Hosoiri T."/>
            <person name="Kaku Y."/>
            <person name="Kodaira H."/>
            <person name="Kondo H."/>
            <person name="Sugawara M."/>
            <person name="Takahashi M."/>
            <person name="Kanda K."/>
            <person name="Yokoi T."/>
            <person name="Furuya T."/>
            <person name="Kikkawa E."/>
            <person name="Omura Y."/>
            <person name="Abe K."/>
            <person name="Kamihara K."/>
            <person name="Katsuta N."/>
            <person name="Sato K."/>
            <person name="Tanikawa M."/>
            <person name="Yamazaki M."/>
            <person name="Ninomiya K."/>
            <person name="Ishibashi T."/>
            <person name="Yamashita H."/>
            <person name="Murakawa K."/>
            <person name="Fujimori K."/>
            <person name="Tanai H."/>
            <person name="Kimata M."/>
            <person name="Watanabe M."/>
            <person name="Hiraoka S."/>
            <person name="Chiba Y."/>
            <person name="Ishida S."/>
            <person name="Ono Y."/>
            <person name="Takiguchi S."/>
            <person name="Watanabe S."/>
            <person name="Yosida M."/>
            <person name="Hotuta T."/>
            <person name="Kusano J."/>
            <person name="Kanehori K."/>
            <person name="Takahashi-Fujii A."/>
            <person name="Hara H."/>
            <person name="Tanase T.-O."/>
            <person name="Nomura Y."/>
            <person name="Togiya S."/>
            <person name="Komai F."/>
            <person name="Hara R."/>
            <person name="Takeuchi K."/>
            <person name="Arita M."/>
            <person name="Imose N."/>
            <person name="Musashino K."/>
            <person name="Yuuki H."/>
            <person name="Oshima A."/>
            <person name="Sasaki N."/>
            <person name="Aotsuka S."/>
            <person name="Yoshikawa Y."/>
            <person name="Matsunawa H."/>
            <person name="Ichihara T."/>
            <person name="Shiohata N."/>
            <person name="Sano S."/>
            <person name="Moriya S."/>
            <person name="Momiyama H."/>
            <person name="Satoh N."/>
            <person name="Takami S."/>
            <person name="Terashima Y."/>
            <person name="Suzuki O."/>
            <person name="Nakagawa S."/>
            <person name="Senoh A."/>
            <person name="Mizoguchi H."/>
            <person name="Goto Y."/>
            <person name="Shimizu F."/>
            <person name="Wakebe H."/>
            <person name="Hishigaki H."/>
            <person name="Watanabe T."/>
            <person name="Sugiyama A."/>
            <person name="Takemoto M."/>
            <person name="Kawakami B."/>
            <person name="Yamazaki M."/>
            <person name="Watanabe K."/>
            <person name="Kumagai A."/>
            <person name="Itakura S."/>
            <person name="Fukuzumi Y."/>
            <person name="Fujimori Y."/>
            <person name="Komiyama M."/>
            <person name="Tashiro H."/>
            <person name="Tanigami A."/>
            <person name="Fujiwara T."/>
            <person name="Ono T."/>
            <person name="Yamada K."/>
            <person name="Fujii Y."/>
            <person name="Ozaki K."/>
            <person name="Hirao M."/>
            <person name="Ohmori Y."/>
            <person name="Kawabata A."/>
            <person name="Hikiji T."/>
            <person name="Kobatake N."/>
            <person name="Inagaki H."/>
            <person name="Ikema Y."/>
            <person name="Okamoto S."/>
            <person name="Okitani R."/>
            <person name="Kawakami T."/>
            <person name="Noguchi S."/>
            <person name="Itoh T."/>
            <person name="Shigeta K."/>
            <person name="Senba T."/>
            <person name="Matsumura K."/>
            <person name="Nakajima Y."/>
            <person name="Mizuno T."/>
            <person name="Morinaga M."/>
            <person name="Sasaki M."/>
            <person name="Togashi T."/>
            <person name="Oyama M."/>
            <person name="Hata H."/>
            <person name="Watanabe M."/>
            <person name="Komatsu T."/>
            <person name="Mizushima-Sugano J."/>
            <person name="Satoh T."/>
            <person name="Shirai Y."/>
            <person name="Takahashi Y."/>
            <person name="Nakagawa K."/>
            <person name="Okumura K."/>
            <person name="Nagase T."/>
            <person name="Nomura N."/>
            <person name="Kikuchi H."/>
            <person name="Masuho Y."/>
            <person name="Yamashita R."/>
            <person name="Nakai K."/>
            <person name="Yada T."/>
            <person name="Nakamura Y."/>
            <person name="Ohara O."/>
            <person name="Isogai T."/>
            <person name="Sugano S."/>
        </authorList>
    </citation>
    <scope>NUCLEOTIDE SEQUENCE [LARGE SCALE MRNA]</scope>
    <scope>VARIANTS LYS-266; GLN-349 AND PRO-703</scope>
    <source>
        <tissue>Teratocarcinoma</tissue>
        <tissue>Trachea</tissue>
    </source>
</reference>
<reference key="2">
    <citation type="journal article" date="2004" name="Nature">
        <title>The DNA sequence and biology of human chromosome 19.</title>
        <authorList>
            <person name="Grimwood J."/>
            <person name="Gordon L.A."/>
            <person name="Olsen A.S."/>
            <person name="Terry A."/>
            <person name="Schmutz J."/>
            <person name="Lamerdin J.E."/>
            <person name="Hellsten U."/>
            <person name="Goodstein D."/>
            <person name="Couronne O."/>
            <person name="Tran-Gyamfi M."/>
            <person name="Aerts A."/>
            <person name="Altherr M."/>
            <person name="Ashworth L."/>
            <person name="Bajorek E."/>
            <person name="Black S."/>
            <person name="Branscomb E."/>
            <person name="Caenepeel S."/>
            <person name="Carrano A.V."/>
            <person name="Caoile C."/>
            <person name="Chan Y.M."/>
            <person name="Christensen M."/>
            <person name="Cleland C.A."/>
            <person name="Copeland A."/>
            <person name="Dalin E."/>
            <person name="Dehal P."/>
            <person name="Denys M."/>
            <person name="Detter J.C."/>
            <person name="Escobar J."/>
            <person name="Flowers D."/>
            <person name="Fotopulos D."/>
            <person name="Garcia C."/>
            <person name="Georgescu A.M."/>
            <person name="Glavina T."/>
            <person name="Gomez M."/>
            <person name="Gonzales E."/>
            <person name="Groza M."/>
            <person name="Hammon N."/>
            <person name="Hawkins T."/>
            <person name="Haydu L."/>
            <person name="Ho I."/>
            <person name="Huang W."/>
            <person name="Israni S."/>
            <person name="Jett J."/>
            <person name="Kadner K."/>
            <person name="Kimball H."/>
            <person name="Kobayashi A."/>
            <person name="Larionov V."/>
            <person name="Leem S.-H."/>
            <person name="Lopez F."/>
            <person name="Lou Y."/>
            <person name="Lowry S."/>
            <person name="Malfatti S."/>
            <person name="Martinez D."/>
            <person name="McCready P.M."/>
            <person name="Medina C."/>
            <person name="Morgan J."/>
            <person name="Nelson K."/>
            <person name="Nolan M."/>
            <person name="Ovcharenko I."/>
            <person name="Pitluck S."/>
            <person name="Pollard M."/>
            <person name="Popkie A.P."/>
            <person name="Predki P."/>
            <person name="Quan G."/>
            <person name="Ramirez L."/>
            <person name="Rash S."/>
            <person name="Retterer J."/>
            <person name="Rodriguez A."/>
            <person name="Rogers S."/>
            <person name="Salamov A."/>
            <person name="Salazar A."/>
            <person name="She X."/>
            <person name="Smith D."/>
            <person name="Slezak T."/>
            <person name="Solovyev V."/>
            <person name="Thayer N."/>
            <person name="Tice H."/>
            <person name="Tsai M."/>
            <person name="Ustaszewska A."/>
            <person name="Vo N."/>
            <person name="Wagner M."/>
            <person name="Wheeler J."/>
            <person name="Wu K."/>
            <person name="Xie G."/>
            <person name="Yang J."/>
            <person name="Dubchak I."/>
            <person name="Furey T.S."/>
            <person name="DeJong P."/>
            <person name="Dickson M."/>
            <person name="Gordon D."/>
            <person name="Eichler E.E."/>
            <person name="Pennacchio L.A."/>
            <person name="Richardson P."/>
            <person name="Stubbs L."/>
            <person name="Rokhsar D.S."/>
            <person name="Myers R.M."/>
            <person name="Rubin E.M."/>
            <person name="Lucas S.M."/>
        </authorList>
    </citation>
    <scope>NUCLEOTIDE SEQUENCE [LARGE SCALE GENOMIC DNA]</scope>
</reference>
<reference key="3">
    <citation type="journal article" date="2004" name="Genome Res.">
        <title>The status, quality, and expansion of the NIH full-length cDNA project: the Mammalian Gene Collection (MGC).</title>
        <authorList>
            <consortium name="The MGC Project Team"/>
        </authorList>
    </citation>
    <scope>NUCLEOTIDE SEQUENCE [LARGE SCALE MRNA] OF 104-703</scope>
    <scope>VARIANTS ARG-138; LYS-266; GLN-349 AND PRO-703</scope>
    <source>
        <tissue>Lung</tissue>
        <tissue>Ovary</tissue>
    </source>
</reference>
<reference key="4">
    <citation type="journal article" date="2006" name="Cell">
        <title>Global, in vivo, and site-specific phosphorylation dynamics in signaling networks.</title>
        <authorList>
            <person name="Olsen J.V."/>
            <person name="Blagoev B."/>
            <person name="Gnad F."/>
            <person name="Macek B."/>
            <person name="Kumar C."/>
            <person name="Mortensen P."/>
            <person name="Mann M."/>
        </authorList>
    </citation>
    <scope>PHOSPHORYLATION [LARGE SCALE ANALYSIS] AT SER-136 AND SER-171</scope>
    <scope>IDENTIFICATION BY MASS SPECTROMETRY [LARGE SCALE ANALYSIS]</scope>
    <source>
        <tissue>Cervix carcinoma</tissue>
    </source>
</reference>
<reference key="5">
    <citation type="journal article" date="2007" name="Science">
        <title>ATM and ATR substrate analysis reveals extensive protein networks responsive to DNA damage.</title>
        <authorList>
            <person name="Matsuoka S."/>
            <person name="Ballif B.A."/>
            <person name="Smogorzewska A."/>
            <person name="McDonald E.R. III"/>
            <person name="Hurov K.E."/>
            <person name="Luo J."/>
            <person name="Bakalarski C.E."/>
            <person name="Zhao Z."/>
            <person name="Solimini N."/>
            <person name="Lerenthal Y."/>
            <person name="Shiloh Y."/>
            <person name="Gygi S.P."/>
            <person name="Elledge S.J."/>
        </authorList>
    </citation>
    <scope>IDENTIFICATION BY MASS SPECTROMETRY [LARGE SCALE ANALYSIS]</scope>
    <source>
        <tissue>Embryonic kidney</tissue>
    </source>
</reference>
<reference key="6">
    <citation type="journal article" date="2008" name="Mol. Cell">
        <title>Kinase-selective enrichment enables quantitative phosphoproteomics of the kinome across the cell cycle.</title>
        <authorList>
            <person name="Daub H."/>
            <person name="Olsen J.V."/>
            <person name="Bairlein M."/>
            <person name="Gnad F."/>
            <person name="Oppermann F.S."/>
            <person name="Korner R."/>
            <person name="Greff Z."/>
            <person name="Keri G."/>
            <person name="Stemmann O."/>
            <person name="Mann M."/>
        </authorList>
    </citation>
    <scope>PHOSPHORYLATION [LARGE SCALE ANALYSIS] AT SER-628 AND SER-639</scope>
    <scope>IDENTIFICATION BY MASS SPECTROMETRY [LARGE SCALE ANALYSIS]</scope>
    <source>
        <tissue>Cervix carcinoma</tissue>
    </source>
</reference>
<reference key="7">
    <citation type="journal article" date="2008" name="Proc. Natl. Acad. Sci. U.S.A.">
        <title>A quantitative atlas of mitotic phosphorylation.</title>
        <authorList>
            <person name="Dephoure N."/>
            <person name="Zhou C."/>
            <person name="Villen J."/>
            <person name="Beausoleil S.A."/>
            <person name="Bakalarski C.E."/>
            <person name="Elledge S.J."/>
            <person name="Gygi S.P."/>
        </authorList>
    </citation>
    <scope>PHOSPHORYLATION [LARGE SCALE ANALYSIS] AT THR-91; SER-93; SER-94; SER-95; SER-97; SER-136; SER-141; SER-171; SER-280; SER-281 AND SER-639</scope>
    <scope>IDENTIFICATION BY MASS SPECTROMETRY [LARGE SCALE ANALYSIS]</scope>
    <source>
        <tissue>Cervix carcinoma</tissue>
    </source>
</reference>
<reference key="8">
    <citation type="journal article" date="2009" name="Anal. Chem.">
        <title>Lys-N and trypsin cover complementary parts of the phosphoproteome in a refined SCX-based approach.</title>
        <authorList>
            <person name="Gauci S."/>
            <person name="Helbig A.O."/>
            <person name="Slijper M."/>
            <person name="Krijgsveld J."/>
            <person name="Heck A.J."/>
            <person name="Mohammed S."/>
        </authorList>
    </citation>
    <scope>IDENTIFICATION BY MASS SPECTROMETRY [LARGE SCALE ANALYSIS]</scope>
</reference>
<reference key="9">
    <citation type="journal article" date="2009" name="Sci. Signal.">
        <title>Quantitative phosphoproteomic analysis of T cell receptor signaling reveals system-wide modulation of protein-protein interactions.</title>
        <authorList>
            <person name="Mayya V."/>
            <person name="Lundgren D.H."/>
            <person name="Hwang S.-I."/>
            <person name="Rezaul K."/>
            <person name="Wu L."/>
            <person name="Eng J.K."/>
            <person name="Rodionov V."/>
            <person name="Han D.K."/>
        </authorList>
    </citation>
    <scope>PHOSPHORYLATION [LARGE SCALE ANALYSIS] AT SER-171 AND SER-280</scope>
    <scope>IDENTIFICATION BY MASS SPECTROMETRY [LARGE SCALE ANALYSIS]</scope>
    <source>
        <tissue>Leukemic T-cell</tissue>
    </source>
</reference>
<reference key="10">
    <citation type="journal article" date="2010" name="Sci. Signal.">
        <title>Quantitative phosphoproteomics reveals widespread full phosphorylation site occupancy during mitosis.</title>
        <authorList>
            <person name="Olsen J.V."/>
            <person name="Vermeulen M."/>
            <person name="Santamaria A."/>
            <person name="Kumar C."/>
            <person name="Miller M.L."/>
            <person name="Jensen L.J."/>
            <person name="Gnad F."/>
            <person name="Cox J."/>
            <person name="Jensen T.S."/>
            <person name="Nigg E.A."/>
            <person name="Brunak S."/>
            <person name="Mann M."/>
        </authorList>
    </citation>
    <scope>PHOSPHORYLATION [LARGE SCALE ANALYSIS] AT SER-136; SER-171; SER-622; SER-628 AND SER-639</scope>
    <scope>IDENTIFICATION BY MASS SPECTROMETRY [LARGE SCALE ANALYSIS]</scope>
    <source>
        <tissue>Cervix carcinoma</tissue>
    </source>
</reference>
<reference key="11">
    <citation type="journal article" date="2011" name="BMC Syst. Biol.">
        <title>Initial characterization of the human central proteome.</title>
        <authorList>
            <person name="Burkard T.R."/>
            <person name="Planyavsky M."/>
            <person name="Kaupe I."/>
            <person name="Breitwieser F.P."/>
            <person name="Buerckstuemmer T."/>
            <person name="Bennett K.L."/>
            <person name="Superti-Furga G."/>
            <person name="Colinge J."/>
        </authorList>
    </citation>
    <scope>IDENTIFICATION BY MASS SPECTROMETRY [LARGE SCALE ANALYSIS]</scope>
</reference>
<reference key="12">
    <citation type="journal article" date="2011" name="Sci. Signal.">
        <title>System-wide temporal characterization of the proteome and phosphoproteome of human embryonic stem cell differentiation.</title>
        <authorList>
            <person name="Rigbolt K.T."/>
            <person name="Prokhorova T.A."/>
            <person name="Akimov V."/>
            <person name="Henningsen J."/>
            <person name="Johansen P.T."/>
            <person name="Kratchmarova I."/>
            <person name="Kassem M."/>
            <person name="Mann M."/>
            <person name="Olsen J.V."/>
            <person name="Blagoev B."/>
        </authorList>
    </citation>
    <scope>PHOSPHORYLATION [LARGE SCALE ANALYSIS] AT THR-91; SER-95; SER-97; SER-136; SER-171 AND SER-639</scope>
    <scope>IDENTIFICATION BY MASS SPECTROMETRY [LARGE SCALE ANALYSIS]</scope>
</reference>
<reference key="13">
    <citation type="journal article" date="2013" name="J. Proteome Res.">
        <title>Toward a comprehensive characterization of a human cancer cell phosphoproteome.</title>
        <authorList>
            <person name="Zhou H."/>
            <person name="Di Palma S."/>
            <person name="Preisinger C."/>
            <person name="Peng M."/>
            <person name="Polat A.N."/>
            <person name="Heck A.J."/>
            <person name="Mohammed S."/>
        </authorList>
    </citation>
    <scope>PHOSPHORYLATION [LARGE SCALE ANALYSIS] AT SER-136; SER-163; SER-171; SER-309 AND SER-628</scope>
    <scope>IDENTIFICATION BY MASS SPECTROMETRY [LARGE SCALE ANALYSIS]</scope>
    <source>
        <tissue>Cervix carcinoma</tissue>
        <tissue>Erythroleukemia</tissue>
    </source>
</reference>
<reference key="14">
    <citation type="journal article" date="2014" name="J. Proteomics">
        <title>An enzyme assisted RP-RPLC approach for in-depth analysis of human liver phosphoproteome.</title>
        <authorList>
            <person name="Bian Y."/>
            <person name="Song C."/>
            <person name="Cheng K."/>
            <person name="Dong M."/>
            <person name="Wang F."/>
            <person name="Huang J."/>
            <person name="Sun D."/>
            <person name="Wang L."/>
            <person name="Ye M."/>
            <person name="Zou H."/>
        </authorList>
    </citation>
    <scope>PHOSPHORYLATION [LARGE SCALE ANALYSIS] AT SER-136; SER-171; SER-280; SER-281 AND SER-628</scope>
    <scope>VARIANT [LARGE SCALE ANALYSIS] LYS-266</scope>
    <scope>IDENTIFICATION BY MASS SPECTROMETRY [LARGE SCALE ANALYSIS]</scope>
    <source>
        <tissue>Liver</tissue>
    </source>
</reference>
<accession>Q8N9T8</accession>
<accession>Q2M1R5</accession>
<accession>Q2M1R7</accession>
<accession>Q7L5J7</accession>
<accession>Q96G92</accession>
<accession>Q9BU50</accession>
<accession>Q9H6I1</accession>
<accession>Q9H978</accession>
<organism>
    <name type="scientific">Homo sapiens</name>
    <name type="common">Human</name>
    <dbReference type="NCBI Taxonomy" id="9606"/>
    <lineage>
        <taxon>Eukaryota</taxon>
        <taxon>Metazoa</taxon>
        <taxon>Chordata</taxon>
        <taxon>Craniata</taxon>
        <taxon>Vertebrata</taxon>
        <taxon>Euteleostomi</taxon>
        <taxon>Mammalia</taxon>
        <taxon>Eutheria</taxon>
        <taxon>Euarchontoglires</taxon>
        <taxon>Primates</taxon>
        <taxon>Haplorrhini</taxon>
        <taxon>Catarrhini</taxon>
        <taxon>Hominidae</taxon>
        <taxon>Homo</taxon>
    </lineage>
</organism>
<comment type="similarity">
    <text evidence="4">Belongs to the KRI1 family.</text>
</comment>
<comment type="sequence caution" evidence="4">
    <conflict type="erroneous initiation">
        <sequence resource="EMBL-CDS" id="BAB14357"/>
    </conflict>
    <text>Truncated N-terminus.</text>
</comment>
<comment type="sequence caution" evidence="4">
    <conflict type="erroneous initiation">
        <sequence resource="EMBL-CDS" id="BAB15278"/>
    </conflict>
    <text>Truncated N-terminus.</text>
</comment>
<comment type="sequence caution" evidence="4">
    <conflict type="miscellaneous discrepancy">
        <sequence resource="EMBL-CDS" id="BAC04240"/>
    </conflict>
    <text>Probable cloning artifact.</text>
</comment>
<dbReference type="EMBL" id="AK023011">
    <property type="protein sequence ID" value="BAB14357.1"/>
    <property type="status" value="ALT_INIT"/>
    <property type="molecule type" value="mRNA"/>
</dbReference>
<dbReference type="EMBL" id="AK025907">
    <property type="protein sequence ID" value="BAB15278.1"/>
    <property type="status" value="ALT_INIT"/>
    <property type="molecule type" value="mRNA"/>
</dbReference>
<dbReference type="EMBL" id="AK093879">
    <property type="protein sequence ID" value="BAC04240.1"/>
    <property type="status" value="ALT_SEQ"/>
    <property type="molecule type" value="mRNA"/>
</dbReference>
<dbReference type="EMBL" id="AC011461">
    <property type="status" value="NOT_ANNOTATED_CDS"/>
    <property type="molecule type" value="Genomic_DNA"/>
</dbReference>
<dbReference type="EMBL" id="AC011475">
    <property type="status" value="NOT_ANNOTATED_CDS"/>
    <property type="molecule type" value="Genomic_DNA"/>
</dbReference>
<dbReference type="EMBL" id="BC002890">
    <property type="protein sequence ID" value="AAH02890.3"/>
    <property type="molecule type" value="mRNA"/>
</dbReference>
<dbReference type="EMBL" id="BC009876">
    <property type="protein sequence ID" value="AAH09876.2"/>
    <property type="molecule type" value="mRNA"/>
</dbReference>
<dbReference type="EMBL" id="BC112249">
    <property type="protein sequence ID" value="AAI12250.1"/>
    <property type="molecule type" value="mRNA"/>
</dbReference>
<dbReference type="EMBL" id="BC112251">
    <property type="protein sequence ID" value="AAI12252.1"/>
    <property type="molecule type" value="mRNA"/>
</dbReference>
<dbReference type="CCDS" id="CCDS12242.2"/>
<dbReference type="RefSeq" id="NP_075384.3">
    <property type="nucleotide sequence ID" value="NM_023008.3"/>
</dbReference>
<dbReference type="SMR" id="Q8N9T8"/>
<dbReference type="BioGRID" id="122394">
    <property type="interactions" value="263"/>
</dbReference>
<dbReference type="FunCoup" id="Q8N9T8">
    <property type="interactions" value="1591"/>
</dbReference>
<dbReference type="IntAct" id="Q8N9T8">
    <property type="interactions" value="174"/>
</dbReference>
<dbReference type="MINT" id="Q8N9T8"/>
<dbReference type="STRING" id="9606.ENSP00000498803"/>
<dbReference type="GlyCosmos" id="Q8N9T8">
    <property type="glycosylation" value="2 sites, 1 glycan"/>
</dbReference>
<dbReference type="GlyGen" id="Q8N9T8">
    <property type="glycosylation" value="2 sites, 1 O-linked glycan (2 sites)"/>
</dbReference>
<dbReference type="iPTMnet" id="Q8N9T8"/>
<dbReference type="PhosphoSitePlus" id="Q8N9T8"/>
<dbReference type="SwissPalm" id="Q8N9T8"/>
<dbReference type="BioMuta" id="KRI1"/>
<dbReference type="DMDM" id="550544300"/>
<dbReference type="jPOST" id="Q8N9T8"/>
<dbReference type="MassIVE" id="Q8N9T8"/>
<dbReference type="PaxDb" id="9606-ENSP00000320917"/>
<dbReference type="PeptideAtlas" id="Q8N9T8"/>
<dbReference type="ProteomicsDB" id="72582"/>
<dbReference type="Pumba" id="Q8N9T8"/>
<dbReference type="Antibodypedia" id="53207">
    <property type="antibodies" value="84 antibodies from 17 providers"/>
</dbReference>
<dbReference type="DNASU" id="65095"/>
<dbReference type="Ensembl" id="ENST00000312962.12">
    <property type="protein sequence ID" value="ENSP00000320917.9"/>
    <property type="gene ID" value="ENSG00000129347.21"/>
</dbReference>
<dbReference type="GeneID" id="65095"/>
<dbReference type="KEGG" id="hsa:65095"/>
<dbReference type="MANE-Select" id="ENST00000312962.12">
    <property type="protein sequence ID" value="ENSP00000320917.9"/>
    <property type="RefSeq nucleotide sequence ID" value="NM_023008.5"/>
    <property type="RefSeq protein sequence ID" value="NP_075384.4"/>
</dbReference>
<dbReference type="UCSC" id="uc002moy.2">
    <property type="organism name" value="human"/>
</dbReference>
<dbReference type="AGR" id="HGNC:25769"/>
<dbReference type="CTD" id="65095"/>
<dbReference type="DisGeNET" id="65095"/>
<dbReference type="GeneCards" id="KRI1"/>
<dbReference type="HGNC" id="HGNC:25769">
    <property type="gene designation" value="KRI1"/>
</dbReference>
<dbReference type="HPA" id="ENSG00000129347">
    <property type="expression patterns" value="Low tissue specificity"/>
</dbReference>
<dbReference type="neXtProt" id="NX_Q8N9T8"/>
<dbReference type="OpenTargets" id="ENSG00000129347"/>
<dbReference type="PharmGKB" id="PA162393682"/>
<dbReference type="VEuPathDB" id="HostDB:ENSG00000129347"/>
<dbReference type="eggNOG" id="KOG2409">
    <property type="taxonomic scope" value="Eukaryota"/>
</dbReference>
<dbReference type="GeneTree" id="ENSGT00390000005605"/>
<dbReference type="HOGENOM" id="CLU_009647_0_1_1"/>
<dbReference type="InParanoid" id="Q8N9T8"/>
<dbReference type="OMA" id="WDNYDPR"/>
<dbReference type="OrthoDB" id="10252032at2759"/>
<dbReference type="PAN-GO" id="Q8N9T8">
    <property type="GO annotations" value="3 GO annotations based on evolutionary models"/>
</dbReference>
<dbReference type="TreeFam" id="TF320278"/>
<dbReference type="PathwayCommons" id="Q8N9T8"/>
<dbReference type="SignaLink" id="Q8N9T8"/>
<dbReference type="BioGRID-ORCS" id="65095">
    <property type="hits" value="428 hits in 687 CRISPR screens"/>
</dbReference>
<dbReference type="CD-CODE" id="91857CE7">
    <property type="entry name" value="Nucleolus"/>
</dbReference>
<dbReference type="ChiTaRS" id="KRI1">
    <property type="organism name" value="human"/>
</dbReference>
<dbReference type="GenomeRNAi" id="65095"/>
<dbReference type="Pharos" id="Q8N9T8">
    <property type="development level" value="Tbio"/>
</dbReference>
<dbReference type="PRO" id="PR:Q8N9T8"/>
<dbReference type="Proteomes" id="UP000005640">
    <property type="component" value="Chromosome 19"/>
</dbReference>
<dbReference type="RNAct" id="Q8N9T8">
    <property type="molecule type" value="protein"/>
</dbReference>
<dbReference type="Bgee" id="ENSG00000129347">
    <property type="expression patterns" value="Expressed in sural nerve and 183 other cell types or tissues"/>
</dbReference>
<dbReference type="ExpressionAtlas" id="Q8N9T8">
    <property type="expression patterns" value="baseline and differential"/>
</dbReference>
<dbReference type="GO" id="GO:0030686">
    <property type="term" value="C:90S preribosome"/>
    <property type="evidence" value="ECO:0000318"/>
    <property type="project" value="GO_Central"/>
</dbReference>
<dbReference type="GO" id="GO:0005730">
    <property type="term" value="C:nucleolus"/>
    <property type="evidence" value="ECO:0000314"/>
    <property type="project" value="HPA"/>
</dbReference>
<dbReference type="GO" id="GO:0003723">
    <property type="term" value="F:RNA binding"/>
    <property type="evidence" value="ECO:0007005"/>
    <property type="project" value="UniProtKB"/>
</dbReference>
<dbReference type="GO" id="GO:0000447">
    <property type="term" value="P:endonucleolytic cleavage in ITS1 to separate SSU-rRNA from 5.8S rRNA and LSU-rRNA from tricistronic rRNA transcript (SSU-rRNA, 5.8S rRNA, LSU-rRNA)"/>
    <property type="evidence" value="ECO:0000318"/>
    <property type="project" value="GO_Central"/>
</dbReference>
<dbReference type="InterPro" id="IPR018034">
    <property type="entry name" value="Kri1"/>
</dbReference>
<dbReference type="InterPro" id="IPR024626">
    <property type="entry name" value="Kri1-like_C"/>
</dbReference>
<dbReference type="PANTHER" id="PTHR14490:SF5">
    <property type="entry name" value="PROTEIN KRI1 HOMOLOG"/>
    <property type="match status" value="1"/>
</dbReference>
<dbReference type="PANTHER" id="PTHR14490">
    <property type="entry name" value="ZINC FINGER, ZZ TYPE"/>
    <property type="match status" value="1"/>
</dbReference>
<dbReference type="Pfam" id="PF05178">
    <property type="entry name" value="Kri1"/>
    <property type="match status" value="1"/>
</dbReference>
<dbReference type="Pfam" id="PF12936">
    <property type="entry name" value="Kri1_C"/>
    <property type="match status" value="1"/>
</dbReference>
<feature type="chain" id="PRO_0000298976" description="Protein KRI1 homolog">
    <location>
        <begin position="1"/>
        <end position="703"/>
    </location>
</feature>
<feature type="region of interest" description="Disordered" evidence="1">
    <location>
        <begin position="27"/>
        <end position="63"/>
    </location>
</feature>
<feature type="region of interest" description="Disordered" evidence="1">
    <location>
        <begin position="83"/>
        <end position="111"/>
    </location>
</feature>
<feature type="region of interest" description="Disordered" evidence="1">
    <location>
        <begin position="127"/>
        <end position="193"/>
    </location>
</feature>
<feature type="region of interest" description="Disordered" evidence="1">
    <location>
        <begin position="249"/>
        <end position="284"/>
    </location>
</feature>
<feature type="region of interest" description="Disordered" evidence="1">
    <location>
        <begin position="305"/>
        <end position="351"/>
    </location>
</feature>
<feature type="region of interest" description="Disordered" evidence="1">
    <location>
        <begin position="412"/>
        <end position="490"/>
    </location>
</feature>
<feature type="region of interest" description="Disordered" evidence="1">
    <location>
        <begin position="594"/>
        <end position="665"/>
    </location>
</feature>
<feature type="compositionally biased region" description="Basic and acidic residues" evidence="1">
    <location>
        <begin position="27"/>
        <end position="42"/>
    </location>
</feature>
<feature type="compositionally biased region" description="Basic and acidic residues" evidence="1">
    <location>
        <begin position="52"/>
        <end position="63"/>
    </location>
</feature>
<feature type="compositionally biased region" description="Basic and acidic residues" evidence="1">
    <location>
        <begin position="155"/>
        <end position="168"/>
    </location>
</feature>
<feature type="compositionally biased region" description="Acidic residues" evidence="1">
    <location>
        <begin position="251"/>
        <end position="266"/>
    </location>
</feature>
<feature type="compositionally biased region" description="Basic and acidic residues" evidence="1">
    <location>
        <begin position="322"/>
        <end position="337"/>
    </location>
</feature>
<feature type="compositionally biased region" description="Acidic residues" evidence="1">
    <location>
        <begin position="417"/>
        <end position="438"/>
    </location>
</feature>
<feature type="compositionally biased region" description="Basic residues" evidence="1">
    <location>
        <begin position="463"/>
        <end position="480"/>
    </location>
</feature>
<feature type="compositionally biased region" description="Basic residues" evidence="1">
    <location>
        <begin position="640"/>
        <end position="656"/>
    </location>
</feature>
<feature type="modified residue" description="Phosphothreonine" evidence="6 10">
    <location>
        <position position="91"/>
    </location>
</feature>
<feature type="modified residue" description="Phosphoserine" evidence="6">
    <location>
        <position position="93"/>
    </location>
</feature>
<feature type="modified residue" description="Phosphoserine" evidence="6">
    <location>
        <position position="94"/>
    </location>
</feature>
<feature type="modified residue" description="Phosphoserine" evidence="6 10">
    <location>
        <position position="95"/>
    </location>
</feature>
<feature type="modified residue" description="Phosphoserine" evidence="6 10">
    <location>
        <position position="97"/>
    </location>
</feature>
<feature type="modified residue" description="Phosphoserine" evidence="5 6 9 10 11 12">
    <location>
        <position position="136"/>
    </location>
</feature>
<feature type="modified residue" description="Phosphoserine" evidence="6">
    <location>
        <position position="141"/>
    </location>
</feature>
<feature type="modified residue" description="Phosphoserine" evidence="11">
    <location>
        <position position="163"/>
    </location>
</feature>
<feature type="modified residue" description="Phosphoserine" evidence="5 6 8 9 10 11 12">
    <location>
        <position position="171"/>
    </location>
</feature>
<feature type="modified residue" description="Phosphoserine" evidence="6 8 12">
    <location>
        <position position="280"/>
    </location>
</feature>
<feature type="modified residue" description="Phosphoserine" evidence="6 12">
    <location>
        <position position="281"/>
    </location>
</feature>
<feature type="modified residue" description="Phosphoserine" evidence="11">
    <location>
        <position position="309"/>
    </location>
</feature>
<feature type="modified residue" description="Phosphoserine" evidence="9">
    <location>
        <position position="622"/>
    </location>
</feature>
<feature type="modified residue" description="Phosphoserine" evidence="7 9 11 12">
    <location>
        <position position="628"/>
    </location>
</feature>
<feature type="modified residue" description="Phosphoserine" evidence="6 7 9 10">
    <location>
        <position position="639"/>
    </location>
</feature>
<feature type="sequence variant" id="VAR_034751" description="In dbSNP:rs12984043." evidence="3">
    <original>G</original>
    <variation>R</variation>
    <location>
        <position position="138"/>
    </location>
</feature>
<feature type="sequence variant" id="VAR_034752" description="In dbSNP:rs11545166.">
    <original>E</original>
    <variation>A</variation>
    <location>
        <position position="179"/>
    </location>
</feature>
<feature type="sequence variant" id="VAR_034753" description="In dbSNP:rs3745249." evidence="2 3 12">
    <original>E</original>
    <variation>K</variation>
    <location>
        <position position="266"/>
    </location>
</feature>
<feature type="sequence variant" id="VAR_034754" description="In dbSNP:rs34743532.">
    <original>S</original>
    <variation>L</variation>
    <location>
        <position position="309"/>
    </location>
</feature>
<feature type="sequence variant" id="VAR_034755" description="In dbSNP:rs33999611.">
    <original>R</original>
    <variation>W</variation>
    <location>
        <position position="336"/>
    </location>
</feature>
<feature type="sequence variant" id="VAR_034756" description="In dbSNP:rs3826709." evidence="2 3">
    <original>E</original>
    <variation>Q</variation>
    <location>
        <position position="349"/>
    </location>
</feature>
<feature type="sequence variant" id="VAR_034757" description="In dbSNP:rs1982074.">
    <original>L</original>
    <variation>P</variation>
    <location>
        <position position="445"/>
    </location>
</feature>
<feature type="sequence variant" id="VAR_034758" description="In dbSNP:rs3087689." evidence="2 3">
    <original>S</original>
    <variation>P</variation>
    <location>
        <position position="703"/>
    </location>
</feature>
<feature type="sequence conflict" description="In Ref. 1; BAC04240." evidence="4" ref="1">
    <original>R</original>
    <variation>W</variation>
    <location>
        <position position="165"/>
    </location>
</feature>
<feature type="sequence conflict" description="In Ref. 1; BAB14357." evidence="4" ref="1">
    <original>E</original>
    <variation>G</variation>
    <location>
        <position position="252"/>
    </location>
</feature>
<feature type="sequence conflict" description="In Ref. 1; BAB14357." evidence="4" ref="1">
    <original>D</original>
    <variation>G</variation>
    <location>
        <position position="279"/>
    </location>
</feature>
<feature type="sequence conflict" description="In Ref. 1; BAC04240." evidence="4" ref="1">
    <original>S</original>
    <variation>N</variation>
    <location>
        <position position="316"/>
    </location>
</feature>
<feature type="sequence conflict" description="In Ref. 1; BAC04240." evidence="4" ref="1">
    <original>K</original>
    <variation>E</variation>
    <location>
        <position position="345"/>
    </location>
</feature>
<feature type="sequence conflict" description="In Ref. 1; BAB15278." evidence="4" ref="1">
    <original>K</original>
    <variation>E</variation>
    <location>
        <position position="556"/>
    </location>
</feature>
<feature type="sequence conflict" description="In Ref. 1; BAB15278." evidence="4" ref="1">
    <original>E</original>
    <variation>G</variation>
    <location>
        <position position="627"/>
    </location>
</feature>